<evidence type="ECO:0000255" key="1">
    <source>
        <dbReference type="HAMAP-Rule" id="MF_00311"/>
    </source>
</evidence>
<dbReference type="EMBL" id="CP000769">
    <property type="protein sequence ID" value="ABS26768.1"/>
    <property type="molecule type" value="Genomic_DNA"/>
</dbReference>
<dbReference type="RefSeq" id="WP_012097362.1">
    <property type="nucleotide sequence ID" value="NC_009675.1"/>
</dbReference>
<dbReference type="SMR" id="A7HDH2"/>
<dbReference type="STRING" id="404589.Anae109_2567"/>
<dbReference type="KEGG" id="afw:Anae109_2567"/>
<dbReference type="HOGENOM" id="CLU_1346616_0_0_7"/>
<dbReference type="Proteomes" id="UP000006382">
    <property type="component" value="Chromosome"/>
</dbReference>
<dbReference type="GO" id="GO:0033178">
    <property type="term" value="C:proton-transporting two-sector ATPase complex, catalytic domain"/>
    <property type="evidence" value="ECO:0007669"/>
    <property type="project" value="InterPro"/>
</dbReference>
<dbReference type="GO" id="GO:0005524">
    <property type="term" value="F:ATP binding"/>
    <property type="evidence" value="ECO:0007669"/>
    <property type="project" value="UniProtKB-UniRule"/>
</dbReference>
<dbReference type="GO" id="GO:0046933">
    <property type="term" value="F:proton-transporting ATP synthase activity, rotational mechanism"/>
    <property type="evidence" value="ECO:0007669"/>
    <property type="project" value="UniProtKB-UniRule"/>
</dbReference>
<dbReference type="GO" id="GO:0046961">
    <property type="term" value="F:proton-transporting ATPase activity, rotational mechanism"/>
    <property type="evidence" value="ECO:0007669"/>
    <property type="project" value="InterPro"/>
</dbReference>
<dbReference type="GO" id="GO:0042777">
    <property type="term" value="P:proton motive force-driven plasma membrane ATP synthesis"/>
    <property type="evidence" value="ECO:0007669"/>
    <property type="project" value="UniProtKB-UniRule"/>
</dbReference>
<dbReference type="Gene3D" id="3.30.2320.30">
    <property type="entry name" value="ATP synthase, E subunit, C-terminal"/>
    <property type="match status" value="1"/>
</dbReference>
<dbReference type="HAMAP" id="MF_00311">
    <property type="entry name" value="ATP_synth_E_arch"/>
    <property type="match status" value="1"/>
</dbReference>
<dbReference type="InterPro" id="IPR038495">
    <property type="entry name" value="ATPase_E_C"/>
</dbReference>
<dbReference type="InterPro" id="IPR002842">
    <property type="entry name" value="ATPase_V1_Esu"/>
</dbReference>
<dbReference type="SUPFAM" id="SSF160527">
    <property type="entry name" value="V-type ATPase subunit E-like"/>
    <property type="match status" value="1"/>
</dbReference>
<keyword id="KW-0066">ATP synthesis</keyword>
<keyword id="KW-0375">Hydrogen ion transport</keyword>
<keyword id="KW-0406">Ion transport</keyword>
<keyword id="KW-1185">Reference proteome</keyword>
<keyword id="KW-0813">Transport</keyword>
<protein>
    <recommendedName>
        <fullName>V-type ATP synthase subunit E</fullName>
    </recommendedName>
    <alternativeName>
        <fullName evidence="1">V-ATPase subunit E</fullName>
    </alternativeName>
</protein>
<feature type="chain" id="PRO_1000059401" description="V-type ATP synthase subunit E">
    <location>
        <begin position="1"/>
        <end position="193"/>
    </location>
</feature>
<name>VATE_ANADF</name>
<comment type="function">
    <text evidence="1">Produces ATP from ADP in the presence of a proton gradient across the membrane.</text>
</comment>
<comment type="similarity">
    <text evidence="1">Belongs to the V-ATPase E subunit family.</text>
</comment>
<organism>
    <name type="scientific">Anaeromyxobacter sp. (strain Fw109-5)</name>
    <dbReference type="NCBI Taxonomy" id="404589"/>
    <lineage>
        <taxon>Bacteria</taxon>
        <taxon>Pseudomonadati</taxon>
        <taxon>Myxococcota</taxon>
        <taxon>Myxococcia</taxon>
        <taxon>Myxococcales</taxon>
        <taxon>Cystobacterineae</taxon>
        <taxon>Anaeromyxobacteraceae</taxon>
        <taxon>Anaeromyxobacter</taxon>
    </lineage>
</organism>
<proteinExistence type="inferred from homology"/>
<reference key="1">
    <citation type="journal article" date="2015" name="Genome Announc.">
        <title>Complete genome sequence of Anaeromyxobacter sp. Fw109-5, an anaerobic, metal-reducing bacterium isolated from a contaminated subsurface environment.</title>
        <authorList>
            <person name="Hwang C."/>
            <person name="Copeland A."/>
            <person name="Lucas S."/>
            <person name="Lapidus A."/>
            <person name="Barry K."/>
            <person name="Glavina Del Rio T."/>
            <person name="Dalin E."/>
            <person name="Tice H."/>
            <person name="Pitluck S."/>
            <person name="Sims D."/>
            <person name="Brettin T."/>
            <person name="Bruce D.C."/>
            <person name="Detter J.C."/>
            <person name="Han C.S."/>
            <person name="Schmutz J."/>
            <person name="Larimer F.W."/>
            <person name="Land M.L."/>
            <person name="Hauser L.J."/>
            <person name="Kyrpides N."/>
            <person name="Lykidis A."/>
            <person name="Richardson P."/>
            <person name="Belieav A."/>
            <person name="Sanford R.A."/>
            <person name="Loeffler F.E."/>
            <person name="Fields M.W."/>
        </authorList>
    </citation>
    <scope>NUCLEOTIDE SEQUENCE [LARGE SCALE GENOMIC DNA]</scope>
    <source>
        <strain>Fw109-5</strain>
    </source>
</reference>
<gene>
    <name evidence="1" type="primary">atpE</name>
    <name type="ordered locus">Anae109_2567</name>
</gene>
<sequence>MGYPELLRVLGEEAAREAREVRAAADRECARILSEARAAADGARAAVLARVREESEAHRRASREAIALERERALLVERRRQLERLRLEALARLRGAGGPALDAALLAELLPEAGDGPLEVIVDPGAEAEVGRALASLDPAVAARAAVRAAPEARGGVALVAGRRVLDDTLPSRLDRAWTVLEAEVARLLFGEG</sequence>
<accession>A7HDH2</accession>